<evidence type="ECO:0000255" key="1">
    <source>
        <dbReference type="HAMAP-Rule" id="MF_00767"/>
    </source>
</evidence>
<evidence type="ECO:0000305" key="2"/>
<sequence>MDNFLALTLTSKKPVITEREINGVRWRWLXLELTPLTPPQGALVISAGIHGNETAPVEMLDALLGAISHGEIPLRWRLLVILGNPPALKQGKRYCHSDMNRMFGGRWQLFAESGETCRARELEQCLEDFYDQGKESVRWHLDLHTAIRASLHPQFGVLPQRDIPWDEKFLTWLGAAGLEALVFHQEPGGTFTHFSARHFGALACTLELGKALPFGQNDLRQFAVTASAIAALLSGESVGIVRTPPLRYRVVSQITRHSPSFEMHMASDTLNFMPFKKGTLLAQDGEERFTVTHDVEYVLFPNPLVALGLRAGLMLEKIS</sequence>
<protein>
    <recommendedName>
        <fullName evidence="1">Succinylglutamate desuccinylase</fullName>
        <ecNumber evidence="1">3.5.1.96</ecNumber>
    </recommendedName>
</protein>
<proteinExistence type="inferred from homology"/>
<organism>
    <name type="scientific">Shigella dysenteriae serotype 1 (strain Sd197)</name>
    <dbReference type="NCBI Taxonomy" id="300267"/>
    <lineage>
        <taxon>Bacteria</taxon>
        <taxon>Pseudomonadati</taxon>
        <taxon>Pseudomonadota</taxon>
        <taxon>Gammaproteobacteria</taxon>
        <taxon>Enterobacterales</taxon>
        <taxon>Enterobacteriaceae</taxon>
        <taxon>Shigella</taxon>
    </lineage>
</organism>
<gene>
    <name evidence="1" type="primary">astE</name>
    <name type="ordered locus">SDY_1533</name>
</gene>
<accession>Q32G86</accession>
<comment type="function">
    <text evidence="1">Transforms N(2)-succinylglutamate into succinate and glutamate.</text>
</comment>
<comment type="catalytic activity">
    <reaction evidence="1">
        <text>N-succinyl-L-glutamate + H2O = L-glutamate + succinate</text>
        <dbReference type="Rhea" id="RHEA:15169"/>
        <dbReference type="ChEBI" id="CHEBI:15377"/>
        <dbReference type="ChEBI" id="CHEBI:29985"/>
        <dbReference type="ChEBI" id="CHEBI:30031"/>
        <dbReference type="ChEBI" id="CHEBI:58763"/>
        <dbReference type="EC" id="3.5.1.96"/>
    </reaction>
</comment>
<comment type="cofactor">
    <cofactor evidence="1">
        <name>Zn(2+)</name>
        <dbReference type="ChEBI" id="CHEBI:29105"/>
    </cofactor>
    <text evidence="1">Binds 1 zinc ion per subunit.</text>
</comment>
<comment type="pathway">
    <text evidence="1">Amino-acid degradation; L-arginine degradation via AST pathway; L-glutamate and succinate from L-arginine: step 5/5.</text>
</comment>
<comment type="similarity">
    <text evidence="1">Belongs to the AspA/AstE family. Succinylglutamate desuccinylase subfamily.</text>
</comment>
<comment type="sequence caution" evidence="2">
    <conflict type="frameshift">
        <sequence resource="EMBL-CDS" id="ABB61669"/>
    </conflict>
</comment>
<feature type="chain" id="PRO_0000257722" description="Succinylglutamate desuccinylase">
    <location>
        <begin position="1"/>
        <end position="319"/>
    </location>
</feature>
<feature type="active site" evidence="1">
    <location>
        <position position="207"/>
    </location>
</feature>
<feature type="binding site" evidence="1">
    <location>
        <position position="50"/>
    </location>
    <ligand>
        <name>Zn(2+)</name>
        <dbReference type="ChEBI" id="CHEBI:29105"/>
    </ligand>
</feature>
<feature type="binding site" evidence="1">
    <location>
        <position position="53"/>
    </location>
    <ligand>
        <name>Zn(2+)</name>
        <dbReference type="ChEBI" id="CHEBI:29105"/>
    </ligand>
</feature>
<feature type="binding site" evidence="1">
    <location>
        <position position="144"/>
    </location>
    <ligand>
        <name>Zn(2+)</name>
        <dbReference type="ChEBI" id="CHEBI:29105"/>
    </ligand>
</feature>
<reference key="1">
    <citation type="journal article" date="2005" name="Nucleic Acids Res.">
        <title>Genome dynamics and diversity of Shigella species, the etiologic agents of bacillary dysentery.</title>
        <authorList>
            <person name="Yang F."/>
            <person name="Yang J."/>
            <person name="Zhang X."/>
            <person name="Chen L."/>
            <person name="Jiang Y."/>
            <person name="Yan Y."/>
            <person name="Tang X."/>
            <person name="Wang J."/>
            <person name="Xiong Z."/>
            <person name="Dong J."/>
            <person name="Xue Y."/>
            <person name="Zhu Y."/>
            <person name="Xu X."/>
            <person name="Sun L."/>
            <person name="Chen S."/>
            <person name="Nie H."/>
            <person name="Peng J."/>
            <person name="Xu J."/>
            <person name="Wang Y."/>
            <person name="Yuan Z."/>
            <person name="Wen Y."/>
            <person name="Yao Z."/>
            <person name="Shen Y."/>
            <person name="Qiang B."/>
            <person name="Hou Y."/>
            <person name="Yu J."/>
            <person name="Jin Q."/>
        </authorList>
    </citation>
    <scope>NUCLEOTIDE SEQUENCE [LARGE SCALE GENOMIC DNA]</scope>
    <source>
        <strain>Sd197</strain>
    </source>
</reference>
<name>ASTE_SHIDS</name>
<keyword id="KW-0056">Arginine metabolism</keyword>
<keyword id="KW-0378">Hydrolase</keyword>
<keyword id="KW-0479">Metal-binding</keyword>
<keyword id="KW-1185">Reference proteome</keyword>
<keyword id="KW-0862">Zinc</keyword>
<dbReference type="EC" id="3.5.1.96" evidence="1"/>
<dbReference type="EMBL" id="CP000034">
    <property type="protein sequence ID" value="ABB61669.1"/>
    <property type="status" value="ALT_FRAME"/>
    <property type="molecule type" value="Genomic_DNA"/>
</dbReference>
<dbReference type="STRING" id="300267.SDY_1533"/>
<dbReference type="EnsemblBacteria" id="ABB61669">
    <property type="protein sequence ID" value="ABB61669"/>
    <property type="gene ID" value="SDY_1533"/>
</dbReference>
<dbReference type="KEGG" id="sdy:SDY_1533"/>
<dbReference type="HOGENOM" id="CLU_071608_0_0_6"/>
<dbReference type="UniPathway" id="UPA00185">
    <property type="reaction ID" value="UER00283"/>
</dbReference>
<dbReference type="Proteomes" id="UP000002716">
    <property type="component" value="Chromosome"/>
</dbReference>
<dbReference type="GO" id="GO:0016788">
    <property type="term" value="F:hydrolase activity, acting on ester bonds"/>
    <property type="evidence" value="ECO:0007669"/>
    <property type="project" value="UniProtKB-UniRule"/>
</dbReference>
<dbReference type="GO" id="GO:0009017">
    <property type="term" value="F:succinylglutamate desuccinylase activity"/>
    <property type="evidence" value="ECO:0007669"/>
    <property type="project" value="UniProtKB-EC"/>
</dbReference>
<dbReference type="GO" id="GO:0008270">
    <property type="term" value="F:zinc ion binding"/>
    <property type="evidence" value="ECO:0007669"/>
    <property type="project" value="UniProtKB-UniRule"/>
</dbReference>
<dbReference type="GO" id="GO:0019544">
    <property type="term" value="P:arginine catabolic process to glutamate"/>
    <property type="evidence" value="ECO:0007669"/>
    <property type="project" value="UniProtKB-UniRule"/>
</dbReference>
<dbReference type="GO" id="GO:0019545">
    <property type="term" value="P:arginine catabolic process to succinate"/>
    <property type="evidence" value="ECO:0007669"/>
    <property type="project" value="UniProtKB-UniRule"/>
</dbReference>
<dbReference type="CDD" id="cd03855">
    <property type="entry name" value="M14_ASTE"/>
    <property type="match status" value="1"/>
</dbReference>
<dbReference type="FunFam" id="3.40.630.10:FF:000017">
    <property type="entry name" value="Succinylglutamate desuccinylase"/>
    <property type="match status" value="1"/>
</dbReference>
<dbReference type="Gene3D" id="3.40.630.10">
    <property type="entry name" value="Zn peptidases"/>
    <property type="match status" value="1"/>
</dbReference>
<dbReference type="HAMAP" id="MF_00767">
    <property type="entry name" value="Arg_catab_AstE"/>
    <property type="match status" value="1"/>
</dbReference>
<dbReference type="InterPro" id="IPR050178">
    <property type="entry name" value="AspA/AstE_fam"/>
</dbReference>
<dbReference type="InterPro" id="IPR055438">
    <property type="entry name" value="AstE_AspA_cat"/>
</dbReference>
<dbReference type="InterPro" id="IPR007036">
    <property type="entry name" value="Aste_AspA_hybrid_dom"/>
</dbReference>
<dbReference type="InterPro" id="IPR016681">
    <property type="entry name" value="SuccinylGlu_desuccinylase"/>
</dbReference>
<dbReference type="NCBIfam" id="TIGR03242">
    <property type="entry name" value="arg_catab_astE"/>
    <property type="match status" value="1"/>
</dbReference>
<dbReference type="NCBIfam" id="NF003706">
    <property type="entry name" value="PRK05324.1"/>
    <property type="match status" value="1"/>
</dbReference>
<dbReference type="PANTHER" id="PTHR15162">
    <property type="entry name" value="ASPARTOACYLASE"/>
    <property type="match status" value="1"/>
</dbReference>
<dbReference type="PANTHER" id="PTHR15162:SF7">
    <property type="entry name" value="SUCCINYLGLUTAMATE DESUCCINYLASE"/>
    <property type="match status" value="1"/>
</dbReference>
<dbReference type="Pfam" id="PF24827">
    <property type="entry name" value="AstE_AspA_cat"/>
    <property type="match status" value="1"/>
</dbReference>
<dbReference type="Pfam" id="PF04952">
    <property type="entry name" value="AstE_AspA_hybrid"/>
    <property type="match status" value="1"/>
</dbReference>
<dbReference type="PIRSF" id="PIRSF017020">
    <property type="entry name" value="AstE"/>
    <property type="match status" value="1"/>
</dbReference>
<dbReference type="SUPFAM" id="SSF53187">
    <property type="entry name" value="Zn-dependent exopeptidases"/>
    <property type="match status" value="1"/>
</dbReference>